<evidence type="ECO:0000255" key="1">
    <source>
        <dbReference type="HAMAP-Rule" id="MF_00076"/>
    </source>
</evidence>
<accession>B0K736</accession>
<name>HIS7_THEP3</name>
<organism>
    <name type="scientific">Thermoanaerobacter pseudethanolicus (strain ATCC 33223 / 39E)</name>
    <name type="common">Clostridium thermohydrosulfuricum</name>
    <dbReference type="NCBI Taxonomy" id="340099"/>
    <lineage>
        <taxon>Bacteria</taxon>
        <taxon>Bacillati</taxon>
        <taxon>Bacillota</taxon>
        <taxon>Clostridia</taxon>
        <taxon>Thermoanaerobacterales</taxon>
        <taxon>Thermoanaerobacteraceae</taxon>
        <taxon>Thermoanaerobacter</taxon>
    </lineage>
</organism>
<dbReference type="EC" id="4.2.1.19" evidence="1"/>
<dbReference type="EMBL" id="CP000924">
    <property type="protein sequence ID" value="ABY94183.1"/>
    <property type="molecule type" value="Genomic_DNA"/>
</dbReference>
<dbReference type="RefSeq" id="WP_012269043.1">
    <property type="nucleotide sequence ID" value="NC_010321.1"/>
</dbReference>
<dbReference type="SMR" id="B0K736"/>
<dbReference type="STRING" id="340099.Teth39_0518"/>
<dbReference type="KEGG" id="tpd:Teth39_0518"/>
<dbReference type="eggNOG" id="COG0131">
    <property type="taxonomic scope" value="Bacteria"/>
</dbReference>
<dbReference type="HOGENOM" id="CLU_044308_3_0_9"/>
<dbReference type="UniPathway" id="UPA00031">
    <property type="reaction ID" value="UER00011"/>
</dbReference>
<dbReference type="Proteomes" id="UP000002156">
    <property type="component" value="Chromosome"/>
</dbReference>
<dbReference type="GO" id="GO:0005737">
    <property type="term" value="C:cytoplasm"/>
    <property type="evidence" value="ECO:0007669"/>
    <property type="project" value="UniProtKB-SubCell"/>
</dbReference>
<dbReference type="GO" id="GO:0004424">
    <property type="term" value="F:imidazoleglycerol-phosphate dehydratase activity"/>
    <property type="evidence" value="ECO:0007669"/>
    <property type="project" value="UniProtKB-UniRule"/>
</dbReference>
<dbReference type="GO" id="GO:0000105">
    <property type="term" value="P:L-histidine biosynthetic process"/>
    <property type="evidence" value="ECO:0007669"/>
    <property type="project" value="UniProtKB-UniRule"/>
</dbReference>
<dbReference type="CDD" id="cd07914">
    <property type="entry name" value="IGPD"/>
    <property type="match status" value="1"/>
</dbReference>
<dbReference type="FunFam" id="3.30.230.40:FF:000001">
    <property type="entry name" value="Imidazoleglycerol-phosphate dehydratase HisB"/>
    <property type="match status" value="1"/>
</dbReference>
<dbReference type="FunFam" id="3.30.230.40:FF:000003">
    <property type="entry name" value="Imidazoleglycerol-phosphate dehydratase HisB"/>
    <property type="match status" value="1"/>
</dbReference>
<dbReference type="Gene3D" id="3.30.230.40">
    <property type="entry name" value="Imidazole glycerol phosphate dehydratase, domain 1"/>
    <property type="match status" value="2"/>
</dbReference>
<dbReference type="HAMAP" id="MF_00076">
    <property type="entry name" value="HisB"/>
    <property type="match status" value="1"/>
</dbReference>
<dbReference type="InterPro" id="IPR038494">
    <property type="entry name" value="IGPD_sf"/>
</dbReference>
<dbReference type="InterPro" id="IPR000807">
    <property type="entry name" value="ImidazoleglycerolP_deHydtase"/>
</dbReference>
<dbReference type="InterPro" id="IPR020565">
    <property type="entry name" value="ImidazoleglycerP_deHydtase_CS"/>
</dbReference>
<dbReference type="InterPro" id="IPR020568">
    <property type="entry name" value="Ribosomal_Su5_D2-typ_SF"/>
</dbReference>
<dbReference type="NCBIfam" id="NF002111">
    <property type="entry name" value="PRK00951.2-1"/>
    <property type="match status" value="1"/>
</dbReference>
<dbReference type="NCBIfam" id="NF002112">
    <property type="entry name" value="PRK00951.2-2"/>
    <property type="match status" value="1"/>
</dbReference>
<dbReference type="NCBIfam" id="NF002114">
    <property type="entry name" value="PRK00951.2-4"/>
    <property type="match status" value="1"/>
</dbReference>
<dbReference type="PANTHER" id="PTHR23133:SF2">
    <property type="entry name" value="IMIDAZOLEGLYCEROL-PHOSPHATE DEHYDRATASE"/>
    <property type="match status" value="1"/>
</dbReference>
<dbReference type="PANTHER" id="PTHR23133">
    <property type="entry name" value="IMIDAZOLEGLYCEROL-PHOSPHATE DEHYDRATASE HIS7"/>
    <property type="match status" value="1"/>
</dbReference>
<dbReference type="Pfam" id="PF00475">
    <property type="entry name" value="IGPD"/>
    <property type="match status" value="1"/>
</dbReference>
<dbReference type="SUPFAM" id="SSF54211">
    <property type="entry name" value="Ribosomal protein S5 domain 2-like"/>
    <property type="match status" value="2"/>
</dbReference>
<dbReference type="PROSITE" id="PS00954">
    <property type="entry name" value="IGP_DEHYDRATASE_1"/>
    <property type="match status" value="1"/>
</dbReference>
<dbReference type="PROSITE" id="PS00955">
    <property type="entry name" value="IGP_DEHYDRATASE_2"/>
    <property type="match status" value="1"/>
</dbReference>
<proteinExistence type="inferred from homology"/>
<feature type="chain" id="PRO_1000092716" description="Imidazoleglycerol-phosphate dehydratase">
    <location>
        <begin position="1"/>
        <end position="194"/>
    </location>
</feature>
<gene>
    <name evidence="1" type="primary">hisB</name>
    <name type="ordered locus">Teth39_0518</name>
</gene>
<protein>
    <recommendedName>
        <fullName evidence="1">Imidazoleglycerol-phosphate dehydratase</fullName>
        <shortName evidence="1">IGPD</shortName>
        <ecNumber evidence="1">4.2.1.19</ecNumber>
    </recommendedName>
</protein>
<comment type="catalytic activity">
    <reaction evidence="1">
        <text>D-erythro-1-(imidazol-4-yl)glycerol 3-phosphate = 3-(imidazol-4-yl)-2-oxopropyl phosphate + H2O</text>
        <dbReference type="Rhea" id="RHEA:11040"/>
        <dbReference type="ChEBI" id="CHEBI:15377"/>
        <dbReference type="ChEBI" id="CHEBI:57766"/>
        <dbReference type="ChEBI" id="CHEBI:58278"/>
        <dbReference type="EC" id="4.2.1.19"/>
    </reaction>
</comment>
<comment type="pathway">
    <text evidence="1">Amino-acid biosynthesis; L-histidine biosynthesis; L-histidine from 5-phospho-alpha-D-ribose 1-diphosphate: step 6/9.</text>
</comment>
<comment type="subcellular location">
    <subcellularLocation>
        <location evidence="1">Cytoplasm</location>
    </subcellularLocation>
</comment>
<comment type="similarity">
    <text evidence="1">Belongs to the imidazoleglycerol-phosphate dehydratase family.</text>
</comment>
<keyword id="KW-0028">Amino-acid biosynthesis</keyword>
<keyword id="KW-0963">Cytoplasm</keyword>
<keyword id="KW-0368">Histidine biosynthesis</keyword>
<keyword id="KW-0456">Lyase</keyword>
<keyword id="KW-1185">Reference proteome</keyword>
<reference key="1">
    <citation type="submission" date="2008-01" db="EMBL/GenBank/DDBJ databases">
        <title>Complete sequence of Thermoanaerobacter pseudethanolicus 39E.</title>
        <authorList>
            <person name="Copeland A."/>
            <person name="Lucas S."/>
            <person name="Lapidus A."/>
            <person name="Barry K."/>
            <person name="Glavina del Rio T."/>
            <person name="Dalin E."/>
            <person name="Tice H."/>
            <person name="Pitluck S."/>
            <person name="Bruce D."/>
            <person name="Goodwin L."/>
            <person name="Saunders E."/>
            <person name="Brettin T."/>
            <person name="Detter J.C."/>
            <person name="Han C."/>
            <person name="Schmutz J."/>
            <person name="Larimer F."/>
            <person name="Land M."/>
            <person name="Hauser L."/>
            <person name="Kyrpides N."/>
            <person name="Lykidis A."/>
            <person name="Hemme C."/>
            <person name="Fields M.W."/>
            <person name="He Z."/>
            <person name="Zhou J."/>
            <person name="Richardson P."/>
        </authorList>
    </citation>
    <scope>NUCLEOTIDE SEQUENCE [LARGE SCALE GENOMIC DNA]</scope>
    <source>
        <strain>ATCC 33223 / DSM 2355 / 39E</strain>
    </source>
</reference>
<sequence length="194" mass="21725">MRKAEVKRKTRETDIYVELNIDGKGNYDIATGIGFFDHMLSLFAKHGLFDLKVVAKGDLEVDTHHTVEDVGIVLGNAFLKAAGDKKSIKRFSTFYVPMDEALVRVSVDISGRPFLYCDLPLKAERVGNFETENVEEFLRAFAYNFGITLHVELLHGSNSHHIIEATFKALGRALDEALRIDERVEGIPSTKGIL</sequence>